<feature type="chain" id="PRO_0000207712" description="Calpain-3">
    <location>
        <begin position="1"/>
        <end position="810"/>
    </location>
</feature>
<feature type="domain" description="Calpain catalytic" evidence="2">
    <location>
        <begin position="68"/>
        <end position="410"/>
    </location>
</feature>
<feature type="domain" description="EF-hand 1" evidence="3">
    <location>
        <begin position="638"/>
        <end position="672"/>
    </location>
</feature>
<feature type="domain" description="EF-hand 2" evidence="3">
    <location>
        <begin position="681"/>
        <end position="714"/>
    </location>
</feature>
<feature type="domain" description="EF-hand 3" evidence="3">
    <location>
        <begin position="711"/>
        <end position="746"/>
    </location>
</feature>
<feature type="domain" description="EF-hand 4" evidence="3">
    <location>
        <begin position="776"/>
        <end position="810"/>
    </location>
</feature>
<feature type="region of interest" description="Disordered" evidence="4">
    <location>
        <begin position="9"/>
        <end position="31"/>
    </location>
</feature>
<feature type="region of interest" description="Domain III">
    <location>
        <begin position="411"/>
        <end position="579"/>
    </location>
</feature>
<feature type="region of interest" description="Disordered" evidence="4">
    <location>
        <begin position="578"/>
        <end position="639"/>
    </location>
</feature>
<feature type="region of interest" description="Linker">
    <location>
        <begin position="580"/>
        <end position="638"/>
    </location>
</feature>
<feature type="region of interest" description="Domain IV">
    <location>
        <begin position="639"/>
        <end position="809"/>
    </location>
</feature>
<feature type="compositionally biased region" description="Low complexity" evidence="4">
    <location>
        <begin position="9"/>
        <end position="27"/>
    </location>
</feature>
<feature type="compositionally biased region" description="Basic and acidic residues" evidence="4">
    <location>
        <begin position="613"/>
        <end position="639"/>
    </location>
</feature>
<feature type="active site" evidence="2">
    <location>
        <position position="123"/>
    </location>
</feature>
<feature type="active site" evidence="2">
    <location>
        <position position="327"/>
    </location>
</feature>
<feature type="active site" evidence="2">
    <location>
        <position position="351"/>
    </location>
</feature>
<feature type="binding site" evidence="1">
    <location>
        <position position="651"/>
    </location>
    <ligand>
        <name>Ca(2+)</name>
        <dbReference type="ChEBI" id="CHEBI:29108"/>
        <label>1</label>
    </ligand>
</feature>
<feature type="binding site" evidence="1">
    <location>
        <position position="654"/>
    </location>
    <ligand>
        <name>Ca(2+)</name>
        <dbReference type="ChEBI" id="CHEBI:29108"/>
        <label>1</label>
    </ligand>
</feature>
<feature type="binding site" evidence="1">
    <location>
        <position position="656"/>
    </location>
    <ligand>
        <name>Ca(2+)</name>
        <dbReference type="ChEBI" id="CHEBI:29108"/>
        <label>1</label>
    </ligand>
</feature>
<feature type="binding site" evidence="1">
    <location>
        <position position="661"/>
    </location>
    <ligand>
        <name>Ca(2+)</name>
        <dbReference type="ChEBI" id="CHEBI:29108"/>
        <label>1</label>
    </ligand>
</feature>
<feature type="binding site" evidence="3">
    <location>
        <position position="694"/>
    </location>
    <ligand>
        <name>Ca(2+)</name>
        <dbReference type="ChEBI" id="CHEBI:29108"/>
        <label>2</label>
    </ligand>
</feature>
<feature type="binding site" evidence="3">
    <location>
        <position position="696"/>
    </location>
    <ligand>
        <name>Ca(2+)</name>
        <dbReference type="ChEBI" id="CHEBI:29108"/>
        <label>2</label>
    </ligand>
</feature>
<feature type="binding site" evidence="3">
    <location>
        <position position="698"/>
    </location>
    <ligand>
        <name>Ca(2+)</name>
        <dbReference type="ChEBI" id="CHEBI:29108"/>
        <label>2</label>
    </ligand>
</feature>
<feature type="binding site" evidence="3">
    <location>
        <position position="700"/>
    </location>
    <ligand>
        <name>Ca(2+)</name>
        <dbReference type="ChEBI" id="CHEBI:29108"/>
        <label>2</label>
    </ligand>
</feature>
<feature type="binding site" evidence="3">
    <location>
        <position position="705"/>
    </location>
    <ligand>
        <name>Ca(2+)</name>
        <dbReference type="ChEBI" id="CHEBI:29108"/>
        <label>2</label>
    </ligand>
</feature>
<feature type="binding site" evidence="3">
    <location>
        <position position="724"/>
    </location>
    <ligand>
        <name>Ca(2+)</name>
        <dbReference type="ChEBI" id="CHEBI:29108"/>
        <label>3</label>
    </ligand>
</feature>
<feature type="binding site" evidence="3">
    <location>
        <position position="726"/>
    </location>
    <ligand>
        <name>Ca(2+)</name>
        <dbReference type="ChEBI" id="CHEBI:29108"/>
        <label>3</label>
    </ligand>
</feature>
<feature type="binding site" evidence="3">
    <location>
        <position position="728"/>
    </location>
    <ligand>
        <name>Ca(2+)</name>
        <dbReference type="ChEBI" id="CHEBI:29108"/>
        <label>3</label>
    </ligand>
</feature>
<feature type="binding site" evidence="3">
    <location>
        <position position="730"/>
    </location>
    <ligand>
        <name>Ca(2+)</name>
        <dbReference type="ChEBI" id="CHEBI:29108"/>
        <label>3</label>
    </ligand>
</feature>
<feature type="binding site" evidence="3">
    <location>
        <position position="735"/>
    </location>
    <ligand>
        <name>Ca(2+)</name>
        <dbReference type="ChEBI" id="CHEBI:29108"/>
        <label>3</label>
    </ligand>
</feature>
<feature type="binding site" evidence="1">
    <location>
        <position position="789"/>
    </location>
    <ligand>
        <name>Ca(2+)</name>
        <dbReference type="ChEBI" id="CHEBI:29108"/>
        <label>4</label>
    </ligand>
</feature>
<feature type="binding site" evidence="1">
    <location>
        <position position="791"/>
    </location>
    <ligand>
        <name>Ca(2+)</name>
        <dbReference type="ChEBI" id="CHEBI:29108"/>
        <label>4</label>
    </ligand>
</feature>
<feature type="binding site" evidence="1">
    <location>
        <position position="793"/>
    </location>
    <ligand>
        <name>Ca(2+)</name>
        <dbReference type="ChEBI" id="CHEBI:29108"/>
        <label>4</label>
    </ligand>
</feature>
<feature type="binding site" evidence="1">
    <location>
        <position position="795"/>
    </location>
    <ligand>
        <name>Ca(2+)</name>
        <dbReference type="ChEBI" id="CHEBI:29108"/>
        <label>4</label>
    </ligand>
</feature>
<organism>
    <name type="scientific">Gallus gallus</name>
    <name type="common">Chicken</name>
    <dbReference type="NCBI Taxonomy" id="9031"/>
    <lineage>
        <taxon>Eukaryota</taxon>
        <taxon>Metazoa</taxon>
        <taxon>Chordata</taxon>
        <taxon>Craniata</taxon>
        <taxon>Vertebrata</taxon>
        <taxon>Euteleostomi</taxon>
        <taxon>Archelosauria</taxon>
        <taxon>Archosauria</taxon>
        <taxon>Dinosauria</taxon>
        <taxon>Saurischia</taxon>
        <taxon>Theropoda</taxon>
        <taxon>Coelurosauria</taxon>
        <taxon>Aves</taxon>
        <taxon>Neognathae</taxon>
        <taxon>Galloanserae</taxon>
        <taxon>Galliformes</taxon>
        <taxon>Phasianidae</taxon>
        <taxon>Phasianinae</taxon>
        <taxon>Gallus</taxon>
    </lineage>
</organism>
<reference key="1">
    <citation type="journal article" date="1995" name="Biochim. Biophys. Acta">
        <title>Identification of a third ubiquitous calpain species -- chicken muscle expresses four distinct calpains.</title>
        <authorList>
            <person name="Sorimachi H."/>
            <person name="Tsukahara T."/>
            <person name="Okada-Ban M."/>
            <person name="Sugita H."/>
            <person name="Ishiura S."/>
            <person name="Suzuki K."/>
        </authorList>
    </citation>
    <scope>NUCLEOTIDE SEQUENCE [MRNA]</scope>
    <source>
        <tissue>Lung</tissue>
    </source>
</reference>
<sequence length="810" mass="93561">MPSAINAAVAQQTAAGSVPSTTSTTTEGTGGGTGGIYSAIISRNQPIIKVKEKTYEELHKKCLEENILYEDPDFPPNETSLFYSQKVPIKFEWKRPREICENPRFIIGGANRTDICQGELGDCWFLAAIACLTLNKKLLCRVIPHDQSFIQNYAGIFHFQFWRYGDWVDVIIDDCLPTYNNQLVFTKSSQRNEFWSALLEKAYAKLHGSYEALKGGNTTEAMEDFTGGVIEFYEIKDAPKDIYKIMKHAIARGSLMASSIDDNLGFHYGAAPRSDIGELIARMVKNLENAQMTYSTVDYQGTDERPAWTIMPMQYETRMSCGLVKGHAYSVTAVEETTYKGEKMRLVRLRNPWGQVEWNGPWSDKSEEWNFIDEEEKIRLQHKIAEDGEFWISLEDFMRHFTKLEICNLTPDTLEADKLQTWTVSVNEGRWVRGCSAGGCRNYPDTFWTNPQYRLKLLEEDDDPEDEEVICSFLVALMQKNRRKERKLGANLYTIGFAIYEVPKEMHGTKHHLQKDFFLYNASKARSKTYINMREISERFRLPPSEYVIIPSTYEPHQEGEFILRVFSEKRSLSEEVENMIEADRPSKKKKGKPIIFVSDRANSNKELTTDEDAGKDGEKTHVDEKKRSSAKAREKSEEETQFRNIFRQIAGDDMEICREELRNVLNNVVKKHKDLKTEGFELESSRSMIALMDTDGSGKINFDEFRHLWDKIKSWQKIFKHYDADHSGTINSYEMRNAVKDAGFRLNNQLYDIITMRYADKNMNIDFDSFICCFVRLDAMFRAFHAFDKDGDGIIKLNVLEWLQLTMYA</sequence>
<protein>
    <recommendedName>
        <fullName>Calpain-3</fullName>
        <ecNumber>3.4.22.54</ecNumber>
    </recommendedName>
    <alternativeName>
        <fullName>Calcium-activated neutral proteinase 3</fullName>
        <shortName>CANP 3</shortName>
    </alternativeName>
    <alternativeName>
        <fullName>Calpain L3</fullName>
    </alternativeName>
    <alternativeName>
        <fullName>Calpain p94</fullName>
    </alternativeName>
    <alternativeName>
        <fullName>Muscle-specific calcium-activated neutral protease 3</fullName>
    </alternativeName>
</protein>
<dbReference type="EC" id="3.4.22.54"/>
<dbReference type="EMBL" id="D38028">
    <property type="protein sequence ID" value="BAA07230.1"/>
    <property type="molecule type" value="mRNA"/>
</dbReference>
<dbReference type="PIR" id="S57196">
    <property type="entry name" value="S57196"/>
</dbReference>
<dbReference type="SMR" id="Q92177"/>
<dbReference type="FunCoup" id="Q92177">
    <property type="interactions" value="10"/>
</dbReference>
<dbReference type="STRING" id="9031.ENSGALP00000053715"/>
<dbReference type="MEROPS" id="C02.004"/>
<dbReference type="PaxDb" id="9031-ENSGALP00000031999"/>
<dbReference type="VEuPathDB" id="HostDB:geneid_423233"/>
<dbReference type="eggNOG" id="KOG0045">
    <property type="taxonomic scope" value="Eukaryota"/>
</dbReference>
<dbReference type="InParanoid" id="Q92177"/>
<dbReference type="OrthoDB" id="424753at2759"/>
<dbReference type="PhylomeDB" id="Q92177"/>
<dbReference type="BRENDA" id="3.4.22.54">
    <property type="organism ID" value="1306"/>
</dbReference>
<dbReference type="Proteomes" id="UP000000539">
    <property type="component" value="Unassembled WGS sequence"/>
</dbReference>
<dbReference type="GO" id="GO:0005737">
    <property type="term" value="C:cytoplasm"/>
    <property type="evidence" value="ECO:0000250"/>
    <property type="project" value="UniProtKB"/>
</dbReference>
<dbReference type="GO" id="GO:0005829">
    <property type="term" value="C:cytosol"/>
    <property type="evidence" value="ECO:0000250"/>
    <property type="project" value="UniProtKB"/>
</dbReference>
<dbReference type="GO" id="GO:0030016">
    <property type="term" value="C:myofibril"/>
    <property type="evidence" value="ECO:0000250"/>
    <property type="project" value="UniProtKB"/>
</dbReference>
<dbReference type="GO" id="GO:0005730">
    <property type="term" value="C:nucleolus"/>
    <property type="evidence" value="ECO:0000250"/>
    <property type="project" value="UniProtKB"/>
</dbReference>
<dbReference type="GO" id="GO:0005634">
    <property type="term" value="C:nucleus"/>
    <property type="evidence" value="ECO:0000250"/>
    <property type="project" value="UniProtKB"/>
</dbReference>
<dbReference type="GO" id="GO:0005886">
    <property type="term" value="C:plasma membrane"/>
    <property type="evidence" value="ECO:0000250"/>
    <property type="project" value="UniProtKB"/>
</dbReference>
<dbReference type="GO" id="GO:0032991">
    <property type="term" value="C:protein-containing complex"/>
    <property type="evidence" value="ECO:0000250"/>
    <property type="project" value="UniProtKB"/>
</dbReference>
<dbReference type="GO" id="GO:0030315">
    <property type="term" value="C:T-tubule"/>
    <property type="evidence" value="ECO:0000250"/>
    <property type="project" value="UniProtKB"/>
</dbReference>
<dbReference type="GO" id="GO:0030018">
    <property type="term" value="C:Z disc"/>
    <property type="evidence" value="ECO:0000250"/>
    <property type="project" value="UniProtKB"/>
</dbReference>
<dbReference type="GO" id="GO:0005509">
    <property type="term" value="F:calcium ion binding"/>
    <property type="evidence" value="ECO:0000250"/>
    <property type="project" value="UniProtKB"/>
</dbReference>
<dbReference type="GO" id="GO:0004198">
    <property type="term" value="F:calcium-dependent cysteine-type endopeptidase activity"/>
    <property type="evidence" value="ECO:0000250"/>
    <property type="project" value="UniProtKB"/>
</dbReference>
<dbReference type="GO" id="GO:0003824">
    <property type="term" value="F:catalytic activity"/>
    <property type="evidence" value="ECO:0000250"/>
    <property type="project" value="UniProtKB"/>
</dbReference>
<dbReference type="GO" id="GO:0055103">
    <property type="term" value="F:ligase regulator activity"/>
    <property type="evidence" value="ECO:0000250"/>
    <property type="project" value="UniProtKB"/>
</dbReference>
<dbReference type="GO" id="GO:0060090">
    <property type="term" value="F:molecular adaptor activity"/>
    <property type="evidence" value="ECO:0000250"/>
    <property type="project" value="UniProtKB"/>
</dbReference>
<dbReference type="GO" id="GO:0008233">
    <property type="term" value="F:peptidase activity"/>
    <property type="evidence" value="ECO:0000250"/>
    <property type="project" value="UniProtKB"/>
</dbReference>
<dbReference type="GO" id="GO:0031402">
    <property type="term" value="F:sodium ion binding"/>
    <property type="evidence" value="ECO:0000250"/>
    <property type="project" value="UniProtKB"/>
</dbReference>
<dbReference type="GO" id="GO:0008307">
    <property type="term" value="F:structural constituent of muscle"/>
    <property type="evidence" value="ECO:0000250"/>
    <property type="project" value="UniProtKB"/>
</dbReference>
<dbReference type="GO" id="GO:0031432">
    <property type="term" value="F:titin binding"/>
    <property type="evidence" value="ECO:0000250"/>
    <property type="project" value="UniProtKB"/>
</dbReference>
<dbReference type="GO" id="GO:1990092">
    <property type="term" value="P:calcium-dependent self proteolysis"/>
    <property type="evidence" value="ECO:0000250"/>
    <property type="project" value="UniProtKB"/>
</dbReference>
<dbReference type="GO" id="GO:0071277">
    <property type="term" value="P:cellular response to calcium ion"/>
    <property type="evidence" value="ECO:0000250"/>
    <property type="project" value="UniProtKB"/>
</dbReference>
<dbReference type="GO" id="GO:0071472">
    <property type="term" value="P:cellular response to salt stress"/>
    <property type="evidence" value="ECO:0000250"/>
    <property type="project" value="UniProtKB"/>
</dbReference>
<dbReference type="GO" id="GO:0061061">
    <property type="term" value="P:muscle structure development"/>
    <property type="evidence" value="ECO:0000250"/>
    <property type="project" value="UniProtKB"/>
</dbReference>
<dbReference type="GO" id="GO:0030239">
    <property type="term" value="P:myofibril assembly"/>
    <property type="evidence" value="ECO:0000250"/>
    <property type="project" value="UniProtKB"/>
</dbReference>
<dbReference type="GO" id="GO:0043066">
    <property type="term" value="P:negative regulation of apoptotic process"/>
    <property type="evidence" value="ECO:0000250"/>
    <property type="project" value="UniProtKB"/>
</dbReference>
<dbReference type="GO" id="GO:0045892">
    <property type="term" value="P:negative regulation of DNA-templated transcription"/>
    <property type="evidence" value="ECO:0000250"/>
    <property type="project" value="UniProtKB"/>
</dbReference>
<dbReference type="GO" id="GO:0033234">
    <property type="term" value="P:negative regulation of protein sumoylation"/>
    <property type="evidence" value="ECO:0000250"/>
    <property type="project" value="UniProtKB"/>
</dbReference>
<dbReference type="GO" id="GO:0045893">
    <property type="term" value="P:positive regulation of DNA-templated transcription"/>
    <property type="evidence" value="ECO:0000250"/>
    <property type="project" value="UniProtKB"/>
</dbReference>
<dbReference type="GO" id="GO:0045862">
    <property type="term" value="P:positive regulation of proteolysis"/>
    <property type="evidence" value="ECO:0000250"/>
    <property type="project" value="UniProtKB"/>
</dbReference>
<dbReference type="GO" id="GO:0051281">
    <property type="term" value="P:positive regulation of release of sequestered calcium ion into cytosol"/>
    <property type="evidence" value="ECO:0000250"/>
    <property type="project" value="UniProtKB"/>
</dbReference>
<dbReference type="GO" id="GO:0014718">
    <property type="term" value="P:positive regulation of satellite cell activation involved in skeletal muscle regeneration"/>
    <property type="evidence" value="ECO:0000250"/>
    <property type="project" value="UniProtKB"/>
</dbReference>
<dbReference type="GO" id="GO:0030163">
    <property type="term" value="P:protein catabolic process"/>
    <property type="evidence" value="ECO:0000250"/>
    <property type="project" value="UniProtKB"/>
</dbReference>
<dbReference type="GO" id="GO:0072657">
    <property type="term" value="P:protein localization to membrane"/>
    <property type="evidence" value="ECO:0000250"/>
    <property type="project" value="UniProtKB"/>
</dbReference>
<dbReference type="GO" id="GO:0065003">
    <property type="term" value="P:protein-containing complex assembly"/>
    <property type="evidence" value="ECO:0000250"/>
    <property type="project" value="UniProtKB"/>
</dbReference>
<dbReference type="GO" id="GO:0006508">
    <property type="term" value="P:proteolysis"/>
    <property type="evidence" value="ECO:0000250"/>
    <property type="project" value="UniProtKB"/>
</dbReference>
<dbReference type="GO" id="GO:0043122">
    <property type="term" value="P:regulation of canonical NF-kappaB signal transduction"/>
    <property type="evidence" value="ECO:0000250"/>
    <property type="project" value="UniProtKB"/>
</dbReference>
<dbReference type="GO" id="GO:0051592">
    <property type="term" value="P:response to calcium ion"/>
    <property type="evidence" value="ECO:0000250"/>
    <property type="project" value="UniProtKB"/>
</dbReference>
<dbReference type="GO" id="GO:0014850">
    <property type="term" value="P:response to muscle activity"/>
    <property type="evidence" value="ECO:0000250"/>
    <property type="project" value="UniProtKB"/>
</dbReference>
<dbReference type="GO" id="GO:0045214">
    <property type="term" value="P:sarcomere organization"/>
    <property type="evidence" value="ECO:0000250"/>
    <property type="project" value="UniProtKB"/>
</dbReference>
<dbReference type="GO" id="GO:0097264">
    <property type="term" value="P:self proteolysis"/>
    <property type="evidence" value="ECO:0000250"/>
    <property type="project" value="UniProtKB"/>
</dbReference>
<dbReference type="CDD" id="cd00214">
    <property type="entry name" value="Calpain_III"/>
    <property type="match status" value="1"/>
</dbReference>
<dbReference type="CDD" id="cd00044">
    <property type="entry name" value="CysPc"/>
    <property type="match status" value="1"/>
</dbReference>
<dbReference type="CDD" id="cd16190">
    <property type="entry name" value="EFh_PEF_CAPN3"/>
    <property type="match status" value="1"/>
</dbReference>
<dbReference type="FunFam" id="3.90.70.10:FF:000555">
    <property type="entry name" value="Calpain-3"/>
    <property type="match status" value="1"/>
</dbReference>
<dbReference type="FunFam" id="1.10.238.10:FF:000065">
    <property type="entry name" value="calpain-3 isoform X1"/>
    <property type="match status" value="1"/>
</dbReference>
<dbReference type="FunFam" id="2.60.120.380:FF:000002">
    <property type="entry name" value="calpain-3 isoform X1"/>
    <property type="match status" value="1"/>
</dbReference>
<dbReference type="Gene3D" id="2.60.120.380">
    <property type="match status" value="1"/>
</dbReference>
<dbReference type="Gene3D" id="3.90.70.10">
    <property type="entry name" value="Cysteine proteinases"/>
    <property type="match status" value="1"/>
</dbReference>
<dbReference type="Gene3D" id="1.10.238.10">
    <property type="entry name" value="EF-hand"/>
    <property type="match status" value="1"/>
</dbReference>
<dbReference type="InterPro" id="IPR033883">
    <property type="entry name" value="C2_III"/>
</dbReference>
<dbReference type="InterPro" id="IPR022684">
    <property type="entry name" value="Calpain_cysteine_protease"/>
</dbReference>
<dbReference type="InterPro" id="IPR022682">
    <property type="entry name" value="Calpain_domain_III"/>
</dbReference>
<dbReference type="InterPro" id="IPR022683">
    <property type="entry name" value="Calpain_III"/>
</dbReference>
<dbReference type="InterPro" id="IPR036213">
    <property type="entry name" value="Calpain_III_sf"/>
</dbReference>
<dbReference type="InterPro" id="IPR054069">
    <property type="entry name" value="CAPN3/13-like_C_EFh"/>
</dbReference>
<dbReference type="InterPro" id="IPR029531">
    <property type="entry name" value="CAPN3_PEF"/>
</dbReference>
<dbReference type="InterPro" id="IPR011992">
    <property type="entry name" value="EF-hand-dom_pair"/>
</dbReference>
<dbReference type="InterPro" id="IPR018247">
    <property type="entry name" value="EF_Hand_1_Ca_BS"/>
</dbReference>
<dbReference type="InterPro" id="IPR002048">
    <property type="entry name" value="EF_hand_dom"/>
</dbReference>
<dbReference type="InterPro" id="IPR038765">
    <property type="entry name" value="Papain-like_cys_pep_sf"/>
</dbReference>
<dbReference type="InterPro" id="IPR000169">
    <property type="entry name" value="Pept_cys_AS"/>
</dbReference>
<dbReference type="InterPro" id="IPR001300">
    <property type="entry name" value="Peptidase_C2_calpain_cat"/>
</dbReference>
<dbReference type="PANTHER" id="PTHR10183">
    <property type="entry name" value="CALPAIN"/>
    <property type="match status" value="1"/>
</dbReference>
<dbReference type="PANTHER" id="PTHR10183:SF329">
    <property type="entry name" value="CALPAIN-3"/>
    <property type="match status" value="1"/>
</dbReference>
<dbReference type="Pfam" id="PF01067">
    <property type="entry name" value="Calpain_III"/>
    <property type="match status" value="1"/>
</dbReference>
<dbReference type="Pfam" id="PF16648">
    <property type="entry name" value="Calpain_u2"/>
    <property type="match status" value="1"/>
</dbReference>
<dbReference type="Pfam" id="PF21875">
    <property type="entry name" value="CAPN13-like_C_EFh"/>
    <property type="match status" value="1"/>
</dbReference>
<dbReference type="Pfam" id="PF00036">
    <property type="entry name" value="EF-hand_1"/>
    <property type="match status" value="1"/>
</dbReference>
<dbReference type="Pfam" id="PF00648">
    <property type="entry name" value="Peptidase_C2"/>
    <property type="match status" value="1"/>
</dbReference>
<dbReference type="PRINTS" id="PR00704">
    <property type="entry name" value="CALPAIN"/>
</dbReference>
<dbReference type="SMART" id="SM00720">
    <property type="entry name" value="calpain_III"/>
    <property type="match status" value="1"/>
</dbReference>
<dbReference type="SMART" id="SM00230">
    <property type="entry name" value="CysPc"/>
    <property type="match status" value="1"/>
</dbReference>
<dbReference type="SMART" id="SM00054">
    <property type="entry name" value="EFh"/>
    <property type="match status" value="3"/>
</dbReference>
<dbReference type="SUPFAM" id="SSF49758">
    <property type="entry name" value="Calpain large subunit, middle domain (domain III)"/>
    <property type="match status" value="1"/>
</dbReference>
<dbReference type="SUPFAM" id="SSF54001">
    <property type="entry name" value="Cysteine proteinases"/>
    <property type="match status" value="1"/>
</dbReference>
<dbReference type="SUPFAM" id="SSF47473">
    <property type="entry name" value="EF-hand"/>
    <property type="match status" value="1"/>
</dbReference>
<dbReference type="PROSITE" id="PS50203">
    <property type="entry name" value="CALPAIN_CAT"/>
    <property type="match status" value="1"/>
</dbReference>
<dbReference type="PROSITE" id="PS00018">
    <property type="entry name" value="EF_HAND_1"/>
    <property type="match status" value="2"/>
</dbReference>
<dbReference type="PROSITE" id="PS50222">
    <property type="entry name" value="EF_HAND_2"/>
    <property type="match status" value="4"/>
</dbReference>
<dbReference type="PROSITE" id="PS00139">
    <property type="entry name" value="THIOL_PROTEASE_CYS"/>
    <property type="match status" value="1"/>
</dbReference>
<proteinExistence type="evidence at transcript level"/>
<name>CAN3_CHICK</name>
<comment type="function">
    <text evidence="1">Calcium-regulated non-lysosomal thiol-protease. Proteolytically cleaves CTBP1. Mediates, with UTP25, the proteasome-independent degradation of p53/TP53.</text>
</comment>
<comment type="catalytic activity">
    <reaction>
        <text>Broad endopeptidase activity.</text>
        <dbReference type="EC" id="3.4.22.54"/>
    </reaction>
</comment>
<comment type="activity regulation">
    <text>Activated by micromolar concentrations of calcium and inhibited by calpastatin.</text>
</comment>
<comment type="subunit">
    <text evidence="1">Homodimer; via EF-hand domain 4. Interacts with TTN/titin. Interacts with CMYA5; this interaction, which results in CMYA5 proteolysis, may protect CAPN3 from autolysis. Interacts with SIMC1. Interacts with UTP25; the interaction is required for CAPN3 translocation to the nucleolus.</text>
</comment>
<comment type="subcellular location">
    <subcellularLocation>
        <location evidence="1">Cytoplasm</location>
    </subcellularLocation>
    <subcellularLocation>
        <location evidence="1">Nucleus</location>
        <location evidence="1">Nucleolus</location>
    </subcellularLocation>
</comment>
<comment type="tissue specificity">
    <text>Skeletal muscle. Low levels in spleen, intestine and bone.</text>
</comment>
<comment type="similarity">
    <text evidence="5">Belongs to the peptidase C2 family.</text>
</comment>
<evidence type="ECO:0000250" key="1">
    <source>
        <dbReference type="UniProtKB" id="P20807"/>
    </source>
</evidence>
<evidence type="ECO:0000255" key="2">
    <source>
        <dbReference type="PROSITE-ProRule" id="PRU00239"/>
    </source>
</evidence>
<evidence type="ECO:0000255" key="3">
    <source>
        <dbReference type="PROSITE-ProRule" id="PRU00448"/>
    </source>
</evidence>
<evidence type="ECO:0000256" key="4">
    <source>
        <dbReference type="SAM" id="MobiDB-lite"/>
    </source>
</evidence>
<evidence type="ECO:0000305" key="5"/>
<keyword id="KW-0106">Calcium</keyword>
<keyword id="KW-0963">Cytoplasm</keyword>
<keyword id="KW-0378">Hydrolase</keyword>
<keyword id="KW-0479">Metal-binding</keyword>
<keyword id="KW-0539">Nucleus</keyword>
<keyword id="KW-0645">Protease</keyword>
<keyword id="KW-1185">Reference proteome</keyword>
<keyword id="KW-0677">Repeat</keyword>
<keyword id="KW-0788">Thiol protease</keyword>
<gene>
    <name type="primary">CAPN3</name>
</gene>
<accession>Q92177</accession>